<dbReference type="EC" id="1.2.4.1"/>
<dbReference type="EMBL" id="AAEK01000007">
    <property type="protein sequence ID" value="EAL15457.1"/>
    <property type="molecule type" value="Genomic_DNA"/>
</dbReference>
<dbReference type="RefSeq" id="WP_000536893.1">
    <property type="nucleotide sequence ID" value="NZ_VVXM01000005.1"/>
</dbReference>
<dbReference type="SMR" id="Q4MTG0"/>
<dbReference type="GeneID" id="93007139"/>
<dbReference type="eggNOG" id="COG1071">
    <property type="taxonomic scope" value="Bacteria"/>
</dbReference>
<dbReference type="OMA" id="GMFRGVN"/>
<dbReference type="OrthoDB" id="9766715at2"/>
<dbReference type="GO" id="GO:0004739">
    <property type="term" value="F:pyruvate dehydrogenase (acetyl-transferring) activity"/>
    <property type="evidence" value="ECO:0007669"/>
    <property type="project" value="UniProtKB-EC"/>
</dbReference>
<dbReference type="GO" id="GO:0009083">
    <property type="term" value="P:branched-chain amino acid catabolic process"/>
    <property type="evidence" value="ECO:0007669"/>
    <property type="project" value="TreeGrafter"/>
</dbReference>
<dbReference type="CDD" id="cd02000">
    <property type="entry name" value="TPP_E1_PDC_ADC_BCADC"/>
    <property type="match status" value="1"/>
</dbReference>
<dbReference type="FunFam" id="3.40.50.970:FF:000023">
    <property type="entry name" value="Pyruvate dehydrogenase E1 component subunit alpha"/>
    <property type="match status" value="1"/>
</dbReference>
<dbReference type="Gene3D" id="3.40.50.970">
    <property type="match status" value="1"/>
</dbReference>
<dbReference type="InterPro" id="IPR050771">
    <property type="entry name" value="Alpha-ketoacid_DH_E1_comp"/>
</dbReference>
<dbReference type="InterPro" id="IPR001017">
    <property type="entry name" value="DH_E1"/>
</dbReference>
<dbReference type="InterPro" id="IPR017596">
    <property type="entry name" value="PdhA/BkdA"/>
</dbReference>
<dbReference type="InterPro" id="IPR029061">
    <property type="entry name" value="THDP-binding"/>
</dbReference>
<dbReference type="NCBIfam" id="TIGR03181">
    <property type="entry name" value="PDH_E1_alph_x"/>
    <property type="match status" value="1"/>
</dbReference>
<dbReference type="PANTHER" id="PTHR43380">
    <property type="entry name" value="2-OXOISOVALERATE DEHYDROGENASE SUBUNIT ALPHA, MITOCHONDRIAL"/>
    <property type="match status" value="1"/>
</dbReference>
<dbReference type="PANTHER" id="PTHR43380:SF1">
    <property type="entry name" value="2-OXOISOVALERATE DEHYDROGENASE SUBUNIT ALPHA, MITOCHONDRIAL"/>
    <property type="match status" value="1"/>
</dbReference>
<dbReference type="Pfam" id="PF00676">
    <property type="entry name" value="E1_dh"/>
    <property type="match status" value="1"/>
</dbReference>
<dbReference type="SUPFAM" id="SSF52518">
    <property type="entry name" value="Thiamin diphosphate-binding fold (THDP-binding)"/>
    <property type="match status" value="1"/>
</dbReference>
<name>ODPA_BACCE</name>
<protein>
    <recommendedName>
        <fullName>Pyruvate dehydrogenase E1 component subunit alpha</fullName>
        <ecNumber>1.2.4.1</ecNumber>
    </recommendedName>
</protein>
<gene>
    <name evidence="4" type="primary">pdhA</name>
    <name type="ORF">BCE_G9241_3962</name>
</gene>
<evidence type="ECO:0000250" key="1">
    <source>
        <dbReference type="UniProtKB" id="P21873"/>
    </source>
</evidence>
<evidence type="ECO:0000269" key="2">
    <source>
    </source>
</evidence>
<evidence type="ECO:0000305" key="3"/>
<evidence type="ECO:0000312" key="4">
    <source>
        <dbReference type="EMBL" id="EAL15457.1"/>
    </source>
</evidence>
<feature type="initiator methionine" description="Removed" evidence="2">
    <location>
        <position position="1"/>
    </location>
</feature>
<feature type="chain" id="PRO_0000271255" description="Pyruvate dehydrogenase E1 component subunit alpha">
    <location>
        <begin position="2"/>
        <end position="371"/>
    </location>
</feature>
<comment type="function">
    <text evidence="1">The pyruvate dehydrogenase complex catalyzes the overall conversion of pyruvate to acetyl-CoA and CO(2). It contains multiple copies of three enzymatic components: pyruvate dehydrogenase (E1), dihydrolipoamide acetyltransferase (E2) and lipoamide dehydrogenase (E3) (By similarity).</text>
</comment>
<comment type="catalytic activity">
    <reaction evidence="1">
        <text>N(6)-[(R)-lipoyl]-L-lysyl-[protein] + pyruvate + H(+) = N(6)-[(R)-S(8)-acetyldihydrolipoyl]-L-lysyl-[protein] + CO2</text>
        <dbReference type="Rhea" id="RHEA:19189"/>
        <dbReference type="Rhea" id="RHEA-COMP:10474"/>
        <dbReference type="Rhea" id="RHEA-COMP:10478"/>
        <dbReference type="ChEBI" id="CHEBI:15361"/>
        <dbReference type="ChEBI" id="CHEBI:15378"/>
        <dbReference type="ChEBI" id="CHEBI:16526"/>
        <dbReference type="ChEBI" id="CHEBI:83099"/>
        <dbReference type="ChEBI" id="CHEBI:83111"/>
        <dbReference type="EC" id="1.2.4.1"/>
    </reaction>
</comment>
<comment type="cofactor">
    <cofactor evidence="1">
        <name>thiamine diphosphate</name>
        <dbReference type="ChEBI" id="CHEBI:58937"/>
    </cofactor>
</comment>
<comment type="subunit">
    <text evidence="3">Heterodimer of an alpha and a beta chain.</text>
</comment>
<comment type="induction">
    <text evidence="2">By acid stress. Under acid-stress, this protein is expressed at a higher level in wild-type B.cereus than in the acid-sensitive mutant strain NB1.</text>
</comment>
<reference evidence="4" key="1">
    <citation type="journal article" date="2004" name="Proc. Natl. Acad. Sci. U.S.A.">
        <title>Identification of anthrax toxin genes in a Bacillus cereus associated with an illness resembling inhalation anthrax.</title>
        <authorList>
            <person name="Hoffmaster A.R."/>
            <person name="Ravel J."/>
            <person name="Rasko D.A."/>
            <person name="Chapman G.D."/>
            <person name="Chute M.D."/>
            <person name="Marston C.K."/>
            <person name="De B.K."/>
            <person name="Sacchi C.T."/>
            <person name="Fitzgerald C."/>
            <person name="Mayer L.W."/>
            <person name="Maiden M.C.J."/>
            <person name="Priest F.G."/>
            <person name="Barker M."/>
            <person name="Jiang L."/>
            <person name="Cer R.Z."/>
            <person name="Rilstone J."/>
            <person name="Peterson S.N."/>
            <person name="Weyant R.S."/>
            <person name="Galloway D.R."/>
            <person name="Read T.D."/>
            <person name="Popovic T."/>
            <person name="Fraser C.M."/>
        </authorList>
    </citation>
    <scope>NUCLEOTIDE SEQUENCE [GENOMIC DNA]</scope>
    <source>
        <strain evidence="4">G9241</strain>
    </source>
</reference>
<reference evidence="3" key="2">
    <citation type="journal article" date="2002" name="J. Appl. Microbiol.">
        <title>Acid stress in the food pathogen Bacillus cereus.</title>
        <authorList>
            <person name="Browne N."/>
            <person name="Dowds B.C.A."/>
        </authorList>
    </citation>
    <scope>PROTEIN SEQUENCE OF 2-21</scope>
    <scope>INDUCTION</scope>
    <source>
        <strain evidence="2">DSM 626 / NCIMB 11796 / T</strain>
    </source>
</reference>
<accession>Q4MTG0</accession>
<accession>P83068</accession>
<accession>P83070</accession>
<proteinExistence type="evidence at protein level"/>
<sequence length="371" mass="41441">MGTKTKKTLFNVDEQMKAIAAQFETLQILNEKGEVVNEAAMPELSDDQLKELMRRMVYTRVLDQRSISLNRQGRLGFYAPTAGQEASQLASHFALEAEDFILPGYRDVPQLVWHGLPLYQAFLFSRGHFMGNQMPENVNALAPQIIIGAQIIQTAGVALGMKLRGKKSVAITYTGDGGASQGDFYEGMNFAGAFKAPAIFVVQNNRYAISTPVEKQSAAKTVAQKAVAAGIYGIQVDGMDPLAVYAATAFARERAVNGEGPTLIETLTFRYGPHTMAGDDPTRYRTKDIENEWEQKDPIVRFRAFLENKGLWSQEVEEKVIEEAKEDIKQAIAKADQAPKQKVTDLMEIMYEKMPYNLAEQYEIYKEKESK</sequence>
<organism>
    <name type="scientific">Bacillus cereus</name>
    <dbReference type="NCBI Taxonomy" id="1396"/>
    <lineage>
        <taxon>Bacteria</taxon>
        <taxon>Bacillati</taxon>
        <taxon>Bacillota</taxon>
        <taxon>Bacilli</taxon>
        <taxon>Bacillales</taxon>
        <taxon>Bacillaceae</taxon>
        <taxon>Bacillus</taxon>
        <taxon>Bacillus cereus group</taxon>
    </lineage>
</organism>
<keyword id="KW-0903">Direct protein sequencing</keyword>
<keyword id="KW-0560">Oxidoreductase</keyword>
<keyword id="KW-0670">Pyruvate</keyword>
<keyword id="KW-0346">Stress response</keyword>
<keyword id="KW-0786">Thiamine pyrophosphate</keyword>